<feature type="chain" id="PRO_1000201383" description="Elongation factor Tu">
    <location>
        <begin position="1"/>
        <end position="395"/>
    </location>
</feature>
<feature type="domain" description="tr-type G">
    <location>
        <begin position="10"/>
        <end position="204"/>
    </location>
</feature>
<feature type="region of interest" description="G1" evidence="1">
    <location>
        <begin position="19"/>
        <end position="26"/>
    </location>
</feature>
<feature type="region of interest" description="G2" evidence="1">
    <location>
        <begin position="60"/>
        <end position="64"/>
    </location>
</feature>
<feature type="region of interest" description="G3" evidence="1">
    <location>
        <begin position="81"/>
        <end position="84"/>
    </location>
</feature>
<feature type="region of interest" description="G4" evidence="1">
    <location>
        <begin position="136"/>
        <end position="139"/>
    </location>
</feature>
<feature type="region of interest" description="G5" evidence="1">
    <location>
        <begin position="174"/>
        <end position="176"/>
    </location>
</feature>
<feature type="binding site" evidence="2">
    <location>
        <begin position="19"/>
        <end position="26"/>
    </location>
    <ligand>
        <name>GTP</name>
        <dbReference type="ChEBI" id="CHEBI:37565"/>
    </ligand>
</feature>
<feature type="binding site" evidence="2">
    <location>
        <position position="26"/>
    </location>
    <ligand>
        <name>Mg(2+)</name>
        <dbReference type="ChEBI" id="CHEBI:18420"/>
    </ligand>
</feature>
<feature type="binding site" evidence="2">
    <location>
        <begin position="81"/>
        <end position="85"/>
    </location>
    <ligand>
        <name>GTP</name>
        <dbReference type="ChEBI" id="CHEBI:37565"/>
    </ligand>
</feature>
<feature type="binding site" evidence="2">
    <location>
        <begin position="136"/>
        <end position="139"/>
    </location>
    <ligand>
        <name>GTP</name>
        <dbReference type="ChEBI" id="CHEBI:37565"/>
    </ligand>
</feature>
<keyword id="KW-0963">Cytoplasm</keyword>
<keyword id="KW-0251">Elongation factor</keyword>
<keyword id="KW-0342">GTP-binding</keyword>
<keyword id="KW-0378">Hydrolase</keyword>
<keyword id="KW-0460">Magnesium</keyword>
<keyword id="KW-0479">Metal-binding</keyword>
<keyword id="KW-0547">Nucleotide-binding</keyword>
<keyword id="KW-0648">Protein biosynthesis</keyword>
<comment type="function">
    <text evidence="2">GTP hydrolase that promotes the GTP-dependent binding of aminoacyl-tRNA to the A-site of ribosomes during protein biosynthesis.</text>
</comment>
<comment type="catalytic activity">
    <reaction evidence="2">
        <text>GTP + H2O = GDP + phosphate + H(+)</text>
        <dbReference type="Rhea" id="RHEA:19669"/>
        <dbReference type="ChEBI" id="CHEBI:15377"/>
        <dbReference type="ChEBI" id="CHEBI:15378"/>
        <dbReference type="ChEBI" id="CHEBI:37565"/>
        <dbReference type="ChEBI" id="CHEBI:43474"/>
        <dbReference type="ChEBI" id="CHEBI:58189"/>
        <dbReference type="EC" id="3.6.5.3"/>
    </reaction>
    <physiologicalReaction direction="left-to-right" evidence="2">
        <dbReference type="Rhea" id="RHEA:19670"/>
    </physiologicalReaction>
</comment>
<comment type="subunit">
    <text evidence="2">Monomer.</text>
</comment>
<comment type="subcellular location">
    <subcellularLocation>
        <location evidence="2">Cytoplasm</location>
    </subcellularLocation>
</comment>
<comment type="similarity">
    <text evidence="2">Belongs to the TRAFAC class translation factor GTPase superfamily. Classic translation factor GTPase family. EF-Tu/EF-1A subfamily.</text>
</comment>
<protein>
    <recommendedName>
        <fullName evidence="2">Elongation factor Tu</fullName>
        <shortName evidence="2">EF-Tu</shortName>
        <ecNumber evidence="2">3.6.5.3</ecNumber>
    </recommendedName>
</protein>
<evidence type="ECO:0000250" key="1"/>
<evidence type="ECO:0000255" key="2">
    <source>
        <dbReference type="HAMAP-Rule" id="MF_00118"/>
    </source>
</evidence>
<proteinExistence type="inferred from homology"/>
<reference key="1">
    <citation type="submission" date="2008-10" db="EMBL/GenBank/DDBJ databases">
        <title>Genome sequence of Bacillus cereus AH820.</title>
        <authorList>
            <person name="Dodson R.J."/>
            <person name="Durkin A.S."/>
            <person name="Rosovitz M.J."/>
            <person name="Rasko D.A."/>
            <person name="Hoffmaster A."/>
            <person name="Ravel J."/>
            <person name="Sutton G."/>
        </authorList>
    </citation>
    <scope>NUCLEOTIDE SEQUENCE [LARGE SCALE GENOMIC DNA]</scope>
    <source>
        <strain>AH820</strain>
    </source>
</reference>
<gene>
    <name evidence="2" type="primary">tuf</name>
    <name type="ordered locus">BCAH820_0120</name>
</gene>
<sequence>MAKAKFERSKPHVNIGTIGHVDHGKTTLTAAITTVLAKAGGAEARGYDQIDAAPEERERGITISTAHVEYETETRHYAHVDCPGHADYVKNMITGAAQMDGGILVVSAADGPMPQTREHILLSRQVGVPYIVVFLNKCDMVDDEELLELVEMEVRDLLSEYGFPGDDIPVIKGSALKALQGEADWEAKIIELMAEVDAYIPTPERETDKPFLMPVEDVFSITGRGTVATGRVERGIVKVGDVVEIIGLAEENASTTVTGVEMFRKLLDQAQAGDNIGALLRGVAREDIQRGQVLAKSGSVKAHAKFKAEVFVLSKEEGGRHTPFFANYRPQFYFRTTDVTGIIQLPEGTEMVMPGDNIEMTIELIAPIAIEEGTKFSIREGGRTVGYGVVATIVE</sequence>
<dbReference type="EC" id="3.6.5.3" evidence="2"/>
<dbReference type="EMBL" id="CP001283">
    <property type="protein sequence ID" value="ACK88748.1"/>
    <property type="molecule type" value="Genomic_DNA"/>
</dbReference>
<dbReference type="RefSeq" id="WP_001029614.1">
    <property type="nucleotide sequence ID" value="NC_011773.1"/>
</dbReference>
<dbReference type="SMR" id="B7JKB7"/>
<dbReference type="GeneID" id="93010945"/>
<dbReference type="KEGG" id="bcu:BCAH820_0120"/>
<dbReference type="HOGENOM" id="CLU_007265_0_1_9"/>
<dbReference type="Proteomes" id="UP000001363">
    <property type="component" value="Chromosome"/>
</dbReference>
<dbReference type="GO" id="GO:0005829">
    <property type="term" value="C:cytosol"/>
    <property type="evidence" value="ECO:0007669"/>
    <property type="project" value="TreeGrafter"/>
</dbReference>
<dbReference type="GO" id="GO:0005525">
    <property type="term" value="F:GTP binding"/>
    <property type="evidence" value="ECO:0007669"/>
    <property type="project" value="UniProtKB-UniRule"/>
</dbReference>
<dbReference type="GO" id="GO:0003924">
    <property type="term" value="F:GTPase activity"/>
    <property type="evidence" value="ECO:0007669"/>
    <property type="project" value="InterPro"/>
</dbReference>
<dbReference type="GO" id="GO:0003746">
    <property type="term" value="F:translation elongation factor activity"/>
    <property type="evidence" value="ECO:0007669"/>
    <property type="project" value="UniProtKB-UniRule"/>
</dbReference>
<dbReference type="CDD" id="cd01884">
    <property type="entry name" value="EF_Tu"/>
    <property type="match status" value="1"/>
</dbReference>
<dbReference type="CDD" id="cd03697">
    <property type="entry name" value="EFTU_II"/>
    <property type="match status" value="1"/>
</dbReference>
<dbReference type="CDD" id="cd03707">
    <property type="entry name" value="EFTU_III"/>
    <property type="match status" value="1"/>
</dbReference>
<dbReference type="FunFam" id="2.40.30.10:FF:000001">
    <property type="entry name" value="Elongation factor Tu"/>
    <property type="match status" value="1"/>
</dbReference>
<dbReference type="FunFam" id="3.40.50.300:FF:000003">
    <property type="entry name" value="Elongation factor Tu"/>
    <property type="match status" value="1"/>
</dbReference>
<dbReference type="Gene3D" id="3.40.50.300">
    <property type="entry name" value="P-loop containing nucleotide triphosphate hydrolases"/>
    <property type="match status" value="1"/>
</dbReference>
<dbReference type="Gene3D" id="2.40.30.10">
    <property type="entry name" value="Translation factors"/>
    <property type="match status" value="2"/>
</dbReference>
<dbReference type="HAMAP" id="MF_00118_B">
    <property type="entry name" value="EF_Tu_B"/>
    <property type="match status" value="1"/>
</dbReference>
<dbReference type="InterPro" id="IPR041709">
    <property type="entry name" value="EF-Tu_GTP-bd"/>
</dbReference>
<dbReference type="InterPro" id="IPR050055">
    <property type="entry name" value="EF-Tu_GTPase"/>
</dbReference>
<dbReference type="InterPro" id="IPR004161">
    <property type="entry name" value="EFTu-like_2"/>
</dbReference>
<dbReference type="InterPro" id="IPR033720">
    <property type="entry name" value="EFTU_2"/>
</dbReference>
<dbReference type="InterPro" id="IPR031157">
    <property type="entry name" value="G_TR_CS"/>
</dbReference>
<dbReference type="InterPro" id="IPR027417">
    <property type="entry name" value="P-loop_NTPase"/>
</dbReference>
<dbReference type="InterPro" id="IPR005225">
    <property type="entry name" value="Small_GTP-bd"/>
</dbReference>
<dbReference type="InterPro" id="IPR000795">
    <property type="entry name" value="T_Tr_GTP-bd_dom"/>
</dbReference>
<dbReference type="InterPro" id="IPR009000">
    <property type="entry name" value="Transl_B-barrel_sf"/>
</dbReference>
<dbReference type="InterPro" id="IPR009001">
    <property type="entry name" value="Transl_elong_EF1A/Init_IF2_C"/>
</dbReference>
<dbReference type="InterPro" id="IPR004541">
    <property type="entry name" value="Transl_elong_EFTu/EF1A_bac/org"/>
</dbReference>
<dbReference type="InterPro" id="IPR004160">
    <property type="entry name" value="Transl_elong_EFTu/EF1A_C"/>
</dbReference>
<dbReference type="NCBIfam" id="TIGR00485">
    <property type="entry name" value="EF-Tu"/>
    <property type="match status" value="1"/>
</dbReference>
<dbReference type="NCBIfam" id="NF000766">
    <property type="entry name" value="PRK00049.1"/>
    <property type="match status" value="1"/>
</dbReference>
<dbReference type="NCBIfam" id="NF009372">
    <property type="entry name" value="PRK12735.1"/>
    <property type="match status" value="1"/>
</dbReference>
<dbReference type="NCBIfam" id="NF009373">
    <property type="entry name" value="PRK12736.1"/>
    <property type="match status" value="1"/>
</dbReference>
<dbReference type="NCBIfam" id="TIGR00231">
    <property type="entry name" value="small_GTP"/>
    <property type="match status" value="1"/>
</dbReference>
<dbReference type="PANTHER" id="PTHR43721:SF22">
    <property type="entry name" value="ELONGATION FACTOR TU, MITOCHONDRIAL"/>
    <property type="match status" value="1"/>
</dbReference>
<dbReference type="PANTHER" id="PTHR43721">
    <property type="entry name" value="ELONGATION FACTOR TU-RELATED"/>
    <property type="match status" value="1"/>
</dbReference>
<dbReference type="Pfam" id="PF00009">
    <property type="entry name" value="GTP_EFTU"/>
    <property type="match status" value="1"/>
</dbReference>
<dbReference type="Pfam" id="PF03144">
    <property type="entry name" value="GTP_EFTU_D2"/>
    <property type="match status" value="1"/>
</dbReference>
<dbReference type="Pfam" id="PF03143">
    <property type="entry name" value="GTP_EFTU_D3"/>
    <property type="match status" value="1"/>
</dbReference>
<dbReference type="PRINTS" id="PR00315">
    <property type="entry name" value="ELONGATNFCT"/>
</dbReference>
<dbReference type="SUPFAM" id="SSF50465">
    <property type="entry name" value="EF-Tu/eEF-1alpha/eIF2-gamma C-terminal domain"/>
    <property type="match status" value="1"/>
</dbReference>
<dbReference type="SUPFAM" id="SSF52540">
    <property type="entry name" value="P-loop containing nucleoside triphosphate hydrolases"/>
    <property type="match status" value="1"/>
</dbReference>
<dbReference type="SUPFAM" id="SSF50447">
    <property type="entry name" value="Translation proteins"/>
    <property type="match status" value="1"/>
</dbReference>
<dbReference type="PROSITE" id="PS00301">
    <property type="entry name" value="G_TR_1"/>
    <property type="match status" value="1"/>
</dbReference>
<dbReference type="PROSITE" id="PS51722">
    <property type="entry name" value="G_TR_2"/>
    <property type="match status" value="1"/>
</dbReference>
<accession>B7JKB7</accession>
<organism>
    <name type="scientific">Bacillus cereus (strain AH820)</name>
    <dbReference type="NCBI Taxonomy" id="405535"/>
    <lineage>
        <taxon>Bacteria</taxon>
        <taxon>Bacillati</taxon>
        <taxon>Bacillota</taxon>
        <taxon>Bacilli</taxon>
        <taxon>Bacillales</taxon>
        <taxon>Bacillaceae</taxon>
        <taxon>Bacillus</taxon>
        <taxon>Bacillus cereus group</taxon>
    </lineage>
</organism>
<name>EFTU_BACC0</name>